<name>RL22_RICPR</name>
<comment type="function">
    <text evidence="1">This protein binds specifically to 23S rRNA; its binding is stimulated by other ribosomal proteins, e.g. L4, L17, and L20. It is important during the early stages of 50S assembly. It makes multiple contacts with different domains of the 23S rRNA in the assembled 50S subunit and ribosome (By similarity).</text>
</comment>
<comment type="function">
    <text evidence="1">The globular domain of the protein is located near the polypeptide exit tunnel on the outside of the subunit, while an extended beta-hairpin is found that lines the wall of the exit tunnel in the center of the 70S ribosome.</text>
</comment>
<comment type="subunit">
    <text evidence="1">Part of the 50S ribosomal subunit.</text>
</comment>
<comment type="similarity">
    <text evidence="1">Belongs to the universal ribosomal protein uL22 family.</text>
</comment>
<organism>
    <name type="scientific">Rickettsia prowazekii (strain Madrid E)</name>
    <dbReference type="NCBI Taxonomy" id="272947"/>
    <lineage>
        <taxon>Bacteria</taxon>
        <taxon>Pseudomonadati</taxon>
        <taxon>Pseudomonadota</taxon>
        <taxon>Alphaproteobacteria</taxon>
        <taxon>Rickettsiales</taxon>
        <taxon>Rickettsiaceae</taxon>
        <taxon>Rickettsieae</taxon>
        <taxon>Rickettsia</taxon>
        <taxon>typhus group</taxon>
    </lineage>
</organism>
<evidence type="ECO:0000255" key="1">
    <source>
        <dbReference type="HAMAP-Rule" id="MF_01331"/>
    </source>
</evidence>
<evidence type="ECO:0000305" key="2"/>
<sequence length="119" mass="13364">MIQKNKNFATAKAKSIRVSPRKLNLVASFIRNMKVSEALVQLTFSPKRIAKIVKDCLQSAIANAENNLGLDIDRLIITKATVGKSVVMKRIMPRAKGRATRINKFFSNLYITVTEKEDN</sequence>
<proteinExistence type="inferred from homology"/>
<dbReference type="EMBL" id="AJ235272">
    <property type="protein sequence ID" value="CAA15094.1"/>
    <property type="molecule type" value="Genomic_DNA"/>
</dbReference>
<dbReference type="PIR" id="D71671">
    <property type="entry name" value="D71671"/>
</dbReference>
<dbReference type="RefSeq" id="NP_221018.1">
    <property type="nucleotide sequence ID" value="NC_000963.1"/>
</dbReference>
<dbReference type="RefSeq" id="WP_004596204.1">
    <property type="nucleotide sequence ID" value="NC_000963.1"/>
</dbReference>
<dbReference type="SMR" id="Q9ZCR0"/>
<dbReference type="STRING" id="272947.gene:17555731"/>
<dbReference type="EnsemblBacteria" id="CAA15094">
    <property type="protein sequence ID" value="CAA15094"/>
    <property type="gene ID" value="CAA15094"/>
</dbReference>
<dbReference type="GeneID" id="57569779"/>
<dbReference type="KEGG" id="rpr:RP654"/>
<dbReference type="PATRIC" id="fig|272947.5.peg.676"/>
<dbReference type="eggNOG" id="COG0091">
    <property type="taxonomic scope" value="Bacteria"/>
</dbReference>
<dbReference type="HOGENOM" id="CLU_083987_3_0_5"/>
<dbReference type="OrthoDB" id="9805969at2"/>
<dbReference type="Proteomes" id="UP000002480">
    <property type="component" value="Chromosome"/>
</dbReference>
<dbReference type="GO" id="GO:0022625">
    <property type="term" value="C:cytosolic large ribosomal subunit"/>
    <property type="evidence" value="ECO:0007669"/>
    <property type="project" value="TreeGrafter"/>
</dbReference>
<dbReference type="GO" id="GO:0019843">
    <property type="term" value="F:rRNA binding"/>
    <property type="evidence" value="ECO:0007669"/>
    <property type="project" value="UniProtKB-UniRule"/>
</dbReference>
<dbReference type="GO" id="GO:0003735">
    <property type="term" value="F:structural constituent of ribosome"/>
    <property type="evidence" value="ECO:0007669"/>
    <property type="project" value="InterPro"/>
</dbReference>
<dbReference type="GO" id="GO:0006412">
    <property type="term" value="P:translation"/>
    <property type="evidence" value="ECO:0007669"/>
    <property type="project" value="UniProtKB-UniRule"/>
</dbReference>
<dbReference type="CDD" id="cd00336">
    <property type="entry name" value="Ribosomal_L22"/>
    <property type="match status" value="1"/>
</dbReference>
<dbReference type="Gene3D" id="3.90.470.10">
    <property type="entry name" value="Ribosomal protein L22/L17"/>
    <property type="match status" value="1"/>
</dbReference>
<dbReference type="HAMAP" id="MF_01331_B">
    <property type="entry name" value="Ribosomal_uL22_B"/>
    <property type="match status" value="1"/>
</dbReference>
<dbReference type="InterPro" id="IPR001063">
    <property type="entry name" value="Ribosomal_uL22"/>
</dbReference>
<dbReference type="InterPro" id="IPR005727">
    <property type="entry name" value="Ribosomal_uL22_bac/chlpt-type"/>
</dbReference>
<dbReference type="InterPro" id="IPR047867">
    <property type="entry name" value="Ribosomal_uL22_bac/org-type"/>
</dbReference>
<dbReference type="InterPro" id="IPR018260">
    <property type="entry name" value="Ribosomal_uL22_CS"/>
</dbReference>
<dbReference type="InterPro" id="IPR036394">
    <property type="entry name" value="Ribosomal_uL22_sf"/>
</dbReference>
<dbReference type="NCBIfam" id="TIGR01044">
    <property type="entry name" value="rplV_bact"/>
    <property type="match status" value="1"/>
</dbReference>
<dbReference type="PANTHER" id="PTHR13501">
    <property type="entry name" value="CHLOROPLAST 50S RIBOSOMAL PROTEIN L22-RELATED"/>
    <property type="match status" value="1"/>
</dbReference>
<dbReference type="PANTHER" id="PTHR13501:SF8">
    <property type="entry name" value="LARGE RIBOSOMAL SUBUNIT PROTEIN UL22M"/>
    <property type="match status" value="1"/>
</dbReference>
<dbReference type="Pfam" id="PF00237">
    <property type="entry name" value="Ribosomal_L22"/>
    <property type="match status" value="1"/>
</dbReference>
<dbReference type="SUPFAM" id="SSF54843">
    <property type="entry name" value="Ribosomal protein L22"/>
    <property type="match status" value="1"/>
</dbReference>
<dbReference type="PROSITE" id="PS00464">
    <property type="entry name" value="RIBOSOMAL_L22"/>
    <property type="match status" value="1"/>
</dbReference>
<protein>
    <recommendedName>
        <fullName evidence="1">Large ribosomal subunit protein uL22</fullName>
    </recommendedName>
    <alternativeName>
        <fullName evidence="2">50S ribosomal protein L22</fullName>
    </alternativeName>
</protein>
<feature type="chain" id="PRO_0000125214" description="Large ribosomal subunit protein uL22">
    <location>
        <begin position="1"/>
        <end position="119"/>
    </location>
</feature>
<keyword id="KW-1185">Reference proteome</keyword>
<keyword id="KW-0687">Ribonucleoprotein</keyword>
<keyword id="KW-0689">Ribosomal protein</keyword>
<keyword id="KW-0694">RNA-binding</keyword>
<keyword id="KW-0699">rRNA-binding</keyword>
<reference key="1">
    <citation type="journal article" date="1998" name="Nature">
        <title>The genome sequence of Rickettsia prowazekii and the origin of mitochondria.</title>
        <authorList>
            <person name="Andersson S.G.E."/>
            <person name="Zomorodipour A."/>
            <person name="Andersson J.O."/>
            <person name="Sicheritz-Ponten T."/>
            <person name="Alsmark U.C.M."/>
            <person name="Podowski R.M."/>
            <person name="Naeslund A.K."/>
            <person name="Eriksson A.-S."/>
            <person name="Winkler H.H."/>
            <person name="Kurland C.G."/>
        </authorList>
    </citation>
    <scope>NUCLEOTIDE SEQUENCE [LARGE SCALE GENOMIC DNA]</scope>
    <source>
        <strain>Madrid E</strain>
    </source>
</reference>
<accession>Q9ZCR0</accession>
<gene>
    <name evidence="1" type="primary">rplV</name>
    <name type="ordered locus">RP654</name>
</gene>